<organism>
    <name type="scientific">Fervidobacterium nodosum (strain ATCC 35602 / DSM 5306 / Rt17-B1)</name>
    <dbReference type="NCBI Taxonomy" id="381764"/>
    <lineage>
        <taxon>Bacteria</taxon>
        <taxon>Thermotogati</taxon>
        <taxon>Thermotogota</taxon>
        <taxon>Thermotogae</taxon>
        <taxon>Thermotogales</taxon>
        <taxon>Fervidobacteriaceae</taxon>
        <taxon>Fervidobacterium</taxon>
    </lineage>
</organism>
<name>Y1278_FERNB</name>
<keyword id="KW-1185">Reference proteome</keyword>
<reference key="1">
    <citation type="submission" date="2007-07" db="EMBL/GenBank/DDBJ databases">
        <title>Complete sequence of Fervidobacterium nodosum Rt17-B1.</title>
        <authorList>
            <consortium name="US DOE Joint Genome Institute"/>
            <person name="Copeland A."/>
            <person name="Lucas S."/>
            <person name="Lapidus A."/>
            <person name="Barry K."/>
            <person name="Glavina del Rio T."/>
            <person name="Dalin E."/>
            <person name="Tice H."/>
            <person name="Pitluck S."/>
            <person name="Saunders E."/>
            <person name="Brettin T."/>
            <person name="Bruce D."/>
            <person name="Detter J.C."/>
            <person name="Han C."/>
            <person name="Schmutz J."/>
            <person name="Larimer F."/>
            <person name="Land M."/>
            <person name="Hauser L."/>
            <person name="Kyrpides N."/>
            <person name="Mikhailova N."/>
            <person name="Nelson K."/>
            <person name="Gogarten J.P."/>
            <person name="Noll K."/>
            <person name="Richardson P."/>
        </authorList>
    </citation>
    <scope>NUCLEOTIDE SEQUENCE [LARGE SCALE GENOMIC DNA]</scope>
    <source>
        <strain>ATCC 35602 / DSM 5306 / Rt17-B1</strain>
    </source>
</reference>
<proteinExistence type="inferred from homology"/>
<gene>
    <name type="ordered locus">Fnod_1278</name>
</gene>
<protein>
    <recommendedName>
        <fullName evidence="1">UPF0597 protein Fnod_1278</fullName>
    </recommendedName>
</protein>
<sequence>MSEFLEGENSKRSIIREIFFDNVKLSYGCTEPVAVGLSVAVGKGYLRGVLKSIDVIMDRNTYKNGLEVGIPGTHLHGFDLAIALAYLVGKPEYGLQVFKDVNSHVLSKAYELKDKIRVSYENSYNLHIKTKLEADNEVLIEITDSHDNISKIVVDGNEIRNTQTSVNFKKDLVKSISLNDIFEYIENPDLDVVNVVKEGIKYNVNAAREGIKKEGNFGYALEEGIPAYVAAGVDERMNGELIPIMTVAGSGNQGIASIVPPTLYGRENEMPEEKIEKAVLLSILVTTYIKAFTGVLTPVCGAGSIASAGSSAAITYLAGGNAEQIKNAINNVLATLFGMTCDGAKRGCALKASIGTQMALNASKLALKDTNIPCGNGFAAKDVEETIRRIELLTKSLRQFDQDVIDFIGHC</sequence>
<comment type="similarity">
    <text evidence="1">Belongs to the UPF0597 family.</text>
</comment>
<accession>A7HMJ2</accession>
<dbReference type="EMBL" id="CP000771">
    <property type="protein sequence ID" value="ABS61125.1"/>
    <property type="molecule type" value="Genomic_DNA"/>
</dbReference>
<dbReference type="SMR" id="A7HMJ2"/>
<dbReference type="STRING" id="381764.Fnod_1278"/>
<dbReference type="KEGG" id="fno:Fnod_1278"/>
<dbReference type="eggNOG" id="COG3681">
    <property type="taxonomic scope" value="Bacteria"/>
</dbReference>
<dbReference type="HOGENOM" id="CLU_051840_0_0_0"/>
<dbReference type="OrthoDB" id="41906at2"/>
<dbReference type="Proteomes" id="UP000002415">
    <property type="component" value="Chromosome"/>
</dbReference>
<dbReference type="GO" id="GO:0080146">
    <property type="term" value="F:L-cysteine desulfhydrase activity"/>
    <property type="evidence" value="ECO:0007669"/>
    <property type="project" value="TreeGrafter"/>
</dbReference>
<dbReference type="GO" id="GO:0019450">
    <property type="term" value="P:L-cysteine catabolic process to pyruvate"/>
    <property type="evidence" value="ECO:0007669"/>
    <property type="project" value="TreeGrafter"/>
</dbReference>
<dbReference type="HAMAP" id="MF_01845">
    <property type="entry name" value="UPF0597"/>
    <property type="match status" value="1"/>
</dbReference>
<dbReference type="InterPro" id="IPR005130">
    <property type="entry name" value="Ser_deHydtase-like_asu"/>
</dbReference>
<dbReference type="InterPro" id="IPR021144">
    <property type="entry name" value="UPF0597"/>
</dbReference>
<dbReference type="PANTHER" id="PTHR30501">
    <property type="entry name" value="UPF0597 PROTEIN YHAM"/>
    <property type="match status" value="1"/>
</dbReference>
<dbReference type="PANTHER" id="PTHR30501:SF2">
    <property type="entry name" value="UPF0597 PROTEIN YHAM"/>
    <property type="match status" value="1"/>
</dbReference>
<dbReference type="Pfam" id="PF03313">
    <property type="entry name" value="SDH_alpha"/>
    <property type="match status" value="1"/>
</dbReference>
<dbReference type="PIRSF" id="PIRSF006054">
    <property type="entry name" value="UCP006054"/>
    <property type="match status" value="1"/>
</dbReference>
<feature type="chain" id="PRO_0000339826" description="UPF0597 protein Fnod_1278">
    <location>
        <begin position="1"/>
        <end position="411"/>
    </location>
</feature>
<evidence type="ECO:0000255" key="1">
    <source>
        <dbReference type="HAMAP-Rule" id="MF_01845"/>
    </source>
</evidence>